<proteinExistence type="evidence at transcript level"/>
<accession>B9FSC8</accession>
<sequence>MSSTAPLLTPYKMGRFDLSHRVVLAPLTRQRSYGNVPQPHAILYYQQRTTKGGLLIAEATGISDTAQGYKDTPGIWTKEQVEAWKPIVDGVHAKGGIFFCQIWHVGRVSNNTFQPNGQAPISSTNKSLKPAVRANGIDVATFSTPRRLETDEIPFVVNDYRVAARNAIEAGFDGVEIHGAHGYLIDQFLKDQVNDRSDKYGGSLENRCRFALEVVQAVTDEIGADKVGIRLSPFASYSEAADSNPEALGLYMANALNKFGILYCHMVEPRMVKLGEKFETPHSLRPIRDAFKGTFIAAGGYNKEDGNKAVSTGYTDLVAYGRLFLSNPDLPERFEIDAPLNKYNRETFYISDPVIGYTDYPFLPSDV</sequence>
<organism>
    <name type="scientific">Oryza sativa subsp. japonica</name>
    <name type="common">Rice</name>
    <dbReference type="NCBI Taxonomy" id="39947"/>
    <lineage>
        <taxon>Eukaryota</taxon>
        <taxon>Viridiplantae</taxon>
        <taxon>Streptophyta</taxon>
        <taxon>Embryophyta</taxon>
        <taxon>Tracheophyta</taxon>
        <taxon>Spermatophyta</taxon>
        <taxon>Magnoliopsida</taxon>
        <taxon>Liliopsida</taxon>
        <taxon>Poales</taxon>
        <taxon>Poaceae</taxon>
        <taxon>BOP clade</taxon>
        <taxon>Oryzoideae</taxon>
        <taxon>Oryzeae</taxon>
        <taxon>Oryzinae</taxon>
        <taxon>Oryza</taxon>
        <taxon>Oryza sativa</taxon>
    </lineage>
</organism>
<reference key="1">
    <citation type="journal article" date="2005" name="Nature">
        <title>The map-based sequence of the rice genome.</title>
        <authorList>
            <consortium name="International rice genome sequencing project (IRGSP)"/>
        </authorList>
    </citation>
    <scope>NUCLEOTIDE SEQUENCE [LARGE SCALE GENOMIC DNA]</scope>
    <source>
        <strain>cv. Nipponbare</strain>
    </source>
</reference>
<reference key="2">
    <citation type="journal article" date="2008" name="Nucleic Acids Res.">
        <title>The rice annotation project database (RAP-DB): 2008 update.</title>
        <authorList>
            <consortium name="The rice annotation project (RAP)"/>
        </authorList>
    </citation>
    <scope>GENOME REANNOTATION</scope>
    <source>
        <strain>cv. Nipponbare</strain>
    </source>
</reference>
<reference key="3">
    <citation type="journal article" date="2013" name="Rice">
        <title>Improvement of the Oryza sativa Nipponbare reference genome using next generation sequence and optical map data.</title>
        <authorList>
            <person name="Kawahara Y."/>
            <person name="de la Bastide M."/>
            <person name="Hamilton J.P."/>
            <person name="Kanamori H."/>
            <person name="McCombie W.R."/>
            <person name="Ouyang S."/>
            <person name="Schwartz D.C."/>
            <person name="Tanaka T."/>
            <person name="Wu J."/>
            <person name="Zhou S."/>
            <person name="Childs K.L."/>
            <person name="Davidson R.M."/>
            <person name="Lin H."/>
            <person name="Quesada-Ocampo L."/>
            <person name="Vaillancourt B."/>
            <person name="Sakai H."/>
            <person name="Lee S.S."/>
            <person name="Kim J."/>
            <person name="Numa H."/>
            <person name="Itoh T."/>
            <person name="Buell C.R."/>
            <person name="Matsumoto T."/>
        </authorList>
    </citation>
    <scope>GENOME REANNOTATION</scope>
    <source>
        <strain>cv. Nipponbare</strain>
    </source>
</reference>
<reference key="4">
    <citation type="journal article" date="2005" name="PLoS Biol.">
        <title>The genomes of Oryza sativa: a history of duplications.</title>
        <authorList>
            <person name="Yu J."/>
            <person name="Wang J."/>
            <person name="Lin W."/>
            <person name="Li S."/>
            <person name="Li H."/>
            <person name="Zhou J."/>
            <person name="Ni P."/>
            <person name="Dong W."/>
            <person name="Hu S."/>
            <person name="Zeng C."/>
            <person name="Zhang J."/>
            <person name="Zhang Y."/>
            <person name="Li R."/>
            <person name="Xu Z."/>
            <person name="Li S."/>
            <person name="Li X."/>
            <person name="Zheng H."/>
            <person name="Cong L."/>
            <person name="Lin L."/>
            <person name="Yin J."/>
            <person name="Geng J."/>
            <person name="Li G."/>
            <person name="Shi J."/>
            <person name="Liu J."/>
            <person name="Lv H."/>
            <person name="Li J."/>
            <person name="Wang J."/>
            <person name="Deng Y."/>
            <person name="Ran L."/>
            <person name="Shi X."/>
            <person name="Wang X."/>
            <person name="Wu Q."/>
            <person name="Li C."/>
            <person name="Ren X."/>
            <person name="Wang J."/>
            <person name="Wang X."/>
            <person name="Li D."/>
            <person name="Liu D."/>
            <person name="Zhang X."/>
            <person name="Ji Z."/>
            <person name="Zhao W."/>
            <person name="Sun Y."/>
            <person name="Zhang Z."/>
            <person name="Bao J."/>
            <person name="Han Y."/>
            <person name="Dong L."/>
            <person name="Ji J."/>
            <person name="Chen P."/>
            <person name="Wu S."/>
            <person name="Liu J."/>
            <person name="Xiao Y."/>
            <person name="Bu D."/>
            <person name="Tan J."/>
            <person name="Yang L."/>
            <person name="Ye C."/>
            <person name="Zhang J."/>
            <person name="Xu J."/>
            <person name="Zhou Y."/>
            <person name="Yu Y."/>
            <person name="Zhang B."/>
            <person name="Zhuang S."/>
            <person name="Wei H."/>
            <person name="Liu B."/>
            <person name="Lei M."/>
            <person name="Yu H."/>
            <person name="Li Y."/>
            <person name="Xu H."/>
            <person name="Wei S."/>
            <person name="He X."/>
            <person name="Fang L."/>
            <person name="Zhang Z."/>
            <person name="Zhang Y."/>
            <person name="Huang X."/>
            <person name="Su Z."/>
            <person name="Tong W."/>
            <person name="Li J."/>
            <person name="Tong Z."/>
            <person name="Li S."/>
            <person name="Ye J."/>
            <person name="Wang L."/>
            <person name="Fang L."/>
            <person name="Lei T."/>
            <person name="Chen C.-S."/>
            <person name="Chen H.-C."/>
            <person name="Xu Z."/>
            <person name="Li H."/>
            <person name="Huang H."/>
            <person name="Zhang F."/>
            <person name="Xu H."/>
            <person name="Li N."/>
            <person name="Zhao C."/>
            <person name="Li S."/>
            <person name="Dong L."/>
            <person name="Huang Y."/>
            <person name="Li L."/>
            <person name="Xi Y."/>
            <person name="Qi Q."/>
            <person name="Li W."/>
            <person name="Zhang B."/>
            <person name="Hu W."/>
            <person name="Zhang Y."/>
            <person name="Tian X."/>
            <person name="Jiao Y."/>
            <person name="Liang X."/>
            <person name="Jin J."/>
            <person name="Gao L."/>
            <person name="Zheng W."/>
            <person name="Hao B."/>
            <person name="Liu S.-M."/>
            <person name="Wang W."/>
            <person name="Yuan L."/>
            <person name="Cao M."/>
            <person name="McDermott J."/>
            <person name="Samudrala R."/>
            <person name="Wang J."/>
            <person name="Wong G.K.-S."/>
            <person name="Yang H."/>
        </authorList>
    </citation>
    <scope>NUCLEOTIDE SEQUENCE [LARGE SCALE GENOMIC DNA]</scope>
    <source>
        <strain>cv. Nipponbare</strain>
    </source>
</reference>
<reference key="5">
    <citation type="journal article" date="2003" name="Science">
        <title>Collection, mapping, and annotation of over 28,000 cDNA clones from japonica rice.</title>
        <authorList>
            <consortium name="The rice full-length cDNA consortium"/>
        </authorList>
    </citation>
    <scope>NUCLEOTIDE SEQUENCE [LARGE SCALE MRNA]</scope>
    <source>
        <strain>cv. Nipponbare</strain>
    </source>
</reference>
<gene>
    <name type="primary">OPR11</name>
    <name type="synonym">OPR3</name>
    <name type="ORF">OsJ_20711</name>
</gene>
<keyword id="KW-0275">Fatty acid biosynthesis</keyword>
<keyword id="KW-0276">Fatty acid metabolism</keyword>
<keyword id="KW-0285">Flavoprotein</keyword>
<keyword id="KW-0288">FMN</keyword>
<keyword id="KW-0444">Lipid biosynthesis</keyword>
<keyword id="KW-0443">Lipid metabolism</keyword>
<keyword id="KW-0521">NADP</keyword>
<keyword id="KW-0560">Oxidoreductase</keyword>
<keyword id="KW-0925">Oxylipin biosynthesis</keyword>
<keyword id="KW-1185">Reference proteome</keyword>
<protein>
    <recommendedName>
        <fullName>Putative 12-oxophytodienoate reductase 11</fullName>
        <ecNumber>1.3.1.-</ecNumber>
    </recommendedName>
    <alternativeName>
        <fullName>OPDA-reductase 11</fullName>
        <shortName>OsOPR11</shortName>
    </alternativeName>
</protein>
<feature type="chain" id="PRO_0000410717" description="Putative 12-oxophytodienoate reductase 11">
    <location>
        <begin position="1"/>
        <end position="367"/>
    </location>
</feature>
<feature type="active site" description="Proton donor" evidence="1">
    <location>
        <position position="183"/>
    </location>
</feature>
<feature type="binding site" evidence="1">
    <location>
        <begin position="26"/>
        <end position="28"/>
    </location>
    <ligand>
        <name>FMN</name>
        <dbReference type="ChEBI" id="CHEBI:58210"/>
    </ligand>
</feature>
<feature type="binding site" evidence="1">
    <location>
        <position position="59"/>
    </location>
    <ligand>
        <name>FMN</name>
        <dbReference type="ChEBI" id="CHEBI:58210"/>
    </ligand>
</feature>
<feature type="binding site" evidence="1">
    <location>
        <position position="101"/>
    </location>
    <ligand>
        <name>FMN</name>
        <dbReference type="ChEBI" id="CHEBI:58210"/>
    </ligand>
</feature>
<feature type="binding site" evidence="1">
    <location>
        <begin position="178"/>
        <end position="181"/>
    </location>
    <ligand>
        <name>substrate</name>
    </ligand>
</feature>
<feature type="binding site" evidence="1">
    <location>
        <position position="230"/>
    </location>
    <ligand>
        <name>FMN</name>
        <dbReference type="ChEBI" id="CHEBI:58210"/>
    </ligand>
</feature>
<feature type="binding site" evidence="1">
    <location>
        <position position="270"/>
    </location>
    <ligand>
        <name>substrate</name>
    </ligand>
</feature>
<feature type="binding site" evidence="1">
    <location>
        <position position="300"/>
    </location>
    <ligand>
        <name>FMN</name>
        <dbReference type="ChEBI" id="CHEBI:58210"/>
    </ligand>
</feature>
<feature type="binding site" evidence="1">
    <location>
        <begin position="321"/>
        <end position="322"/>
    </location>
    <ligand>
        <name>FMN</name>
        <dbReference type="ChEBI" id="CHEBI:58210"/>
    </ligand>
</feature>
<name>OPR11_ORYSJ</name>
<comment type="function">
    <text evidence="1">Putative oxophytodienoate reductase that may be involved in the biosynthesis or metabolism of oxylipin signaling molecules.</text>
</comment>
<comment type="cofactor">
    <cofactor>
        <name>FMN</name>
        <dbReference type="ChEBI" id="CHEBI:58210"/>
    </cofactor>
</comment>
<comment type="similarity">
    <text evidence="2">Belongs to the NADH:flavin oxidoreductase/NADH oxidase family.</text>
</comment>
<evidence type="ECO:0000250" key="1"/>
<evidence type="ECO:0000305" key="2"/>
<dbReference type="EC" id="1.3.1.-"/>
<dbReference type="EMBL" id="AP008212">
    <property type="status" value="NOT_ANNOTATED_CDS"/>
    <property type="molecule type" value="Genomic_DNA"/>
</dbReference>
<dbReference type="EMBL" id="AP014962">
    <property type="status" value="NOT_ANNOTATED_CDS"/>
    <property type="molecule type" value="Genomic_DNA"/>
</dbReference>
<dbReference type="EMBL" id="CM000143">
    <property type="protein sequence ID" value="EEE65389.1"/>
    <property type="molecule type" value="Genomic_DNA"/>
</dbReference>
<dbReference type="EMBL" id="AK102440">
    <property type="status" value="NOT_ANNOTATED_CDS"/>
    <property type="molecule type" value="mRNA"/>
</dbReference>
<dbReference type="SMR" id="B9FSC8"/>
<dbReference type="FunCoup" id="B9FSC8">
    <property type="interactions" value="136"/>
</dbReference>
<dbReference type="STRING" id="39947.B9FSC8"/>
<dbReference type="PaxDb" id="39947-B9FSC8"/>
<dbReference type="InParanoid" id="B9FSC8"/>
<dbReference type="Proteomes" id="UP000000763">
    <property type="component" value="Chromosome 6"/>
</dbReference>
<dbReference type="Proteomes" id="UP000007752">
    <property type="component" value="Chromosome 6"/>
</dbReference>
<dbReference type="Proteomes" id="UP000059680">
    <property type="component" value="Chromosome 6"/>
</dbReference>
<dbReference type="GO" id="GO:0010181">
    <property type="term" value="F:FMN binding"/>
    <property type="evidence" value="ECO:0007669"/>
    <property type="project" value="InterPro"/>
</dbReference>
<dbReference type="GO" id="GO:0016491">
    <property type="term" value="F:oxidoreductase activity"/>
    <property type="evidence" value="ECO:0000318"/>
    <property type="project" value="GO_Central"/>
</dbReference>
<dbReference type="GO" id="GO:0006633">
    <property type="term" value="P:fatty acid biosynthetic process"/>
    <property type="evidence" value="ECO:0007669"/>
    <property type="project" value="UniProtKB-KW"/>
</dbReference>
<dbReference type="GO" id="GO:0031408">
    <property type="term" value="P:oxylipin biosynthetic process"/>
    <property type="evidence" value="ECO:0007669"/>
    <property type="project" value="UniProtKB-KW"/>
</dbReference>
<dbReference type="CDD" id="cd02933">
    <property type="entry name" value="OYE_like_FMN"/>
    <property type="match status" value="1"/>
</dbReference>
<dbReference type="FunFam" id="3.20.20.70:FF:000073">
    <property type="entry name" value="12-oxophytodienoate reductase 3"/>
    <property type="match status" value="1"/>
</dbReference>
<dbReference type="Gene3D" id="3.20.20.70">
    <property type="entry name" value="Aldolase class I"/>
    <property type="match status" value="1"/>
</dbReference>
<dbReference type="InterPro" id="IPR013785">
    <property type="entry name" value="Aldolase_TIM"/>
</dbReference>
<dbReference type="InterPro" id="IPR001155">
    <property type="entry name" value="OxRdtase_FMN_N"/>
</dbReference>
<dbReference type="InterPro" id="IPR045247">
    <property type="entry name" value="Oye-like"/>
</dbReference>
<dbReference type="PANTHER" id="PTHR22893">
    <property type="entry name" value="NADH OXIDOREDUCTASE-RELATED"/>
    <property type="match status" value="1"/>
</dbReference>
<dbReference type="PANTHER" id="PTHR22893:SF91">
    <property type="entry name" value="NADPH DEHYDROGENASE 2-RELATED"/>
    <property type="match status" value="1"/>
</dbReference>
<dbReference type="Pfam" id="PF00724">
    <property type="entry name" value="Oxidored_FMN"/>
    <property type="match status" value="1"/>
</dbReference>
<dbReference type="SUPFAM" id="SSF51395">
    <property type="entry name" value="FMN-linked oxidoreductases"/>
    <property type="match status" value="1"/>
</dbReference>